<accession>A9IYK5</accession>
<evidence type="ECO:0000255" key="1">
    <source>
        <dbReference type="HAMAP-Rule" id="MF_00016"/>
    </source>
</evidence>
<evidence type="ECO:0000256" key="2">
    <source>
        <dbReference type="SAM" id="MobiDB-lite"/>
    </source>
</evidence>
<dbReference type="EC" id="3.6.4.-" evidence="1"/>
<dbReference type="EMBL" id="AM260525">
    <property type="protein sequence ID" value="CAK02380.1"/>
    <property type="molecule type" value="Genomic_DNA"/>
</dbReference>
<dbReference type="RefSeq" id="WP_012232438.1">
    <property type="nucleotide sequence ID" value="NC_010161.1"/>
</dbReference>
<dbReference type="SMR" id="A9IYK5"/>
<dbReference type="KEGG" id="btr:BT_2375"/>
<dbReference type="eggNOG" id="COG2255">
    <property type="taxonomic scope" value="Bacteria"/>
</dbReference>
<dbReference type="HOGENOM" id="CLU_055599_1_0_5"/>
<dbReference type="Proteomes" id="UP000001592">
    <property type="component" value="Chromosome"/>
</dbReference>
<dbReference type="GO" id="GO:0005737">
    <property type="term" value="C:cytoplasm"/>
    <property type="evidence" value="ECO:0007669"/>
    <property type="project" value="UniProtKB-SubCell"/>
</dbReference>
<dbReference type="GO" id="GO:0048476">
    <property type="term" value="C:Holliday junction resolvase complex"/>
    <property type="evidence" value="ECO:0007669"/>
    <property type="project" value="UniProtKB-UniRule"/>
</dbReference>
<dbReference type="GO" id="GO:0005524">
    <property type="term" value="F:ATP binding"/>
    <property type="evidence" value="ECO:0007669"/>
    <property type="project" value="UniProtKB-UniRule"/>
</dbReference>
<dbReference type="GO" id="GO:0016887">
    <property type="term" value="F:ATP hydrolysis activity"/>
    <property type="evidence" value="ECO:0007669"/>
    <property type="project" value="InterPro"/>
</dbReference>
<dbReference type="GO" id="GO:0000400">
    <property type="term" value="F:four-way junction DNA binding"/>
    <property type="evidence" value="ECO:0007669"/>
    <property type="project" value="UniProtKB-UniRule"/>
</dbReference>
<dbReference type="GO" id="GO:0009378">
    <property type="term" value="F:four-way junction helicase activity"/>
    <property type="evidence" value="ECO:0007669"/>
    <property type="project" value="InterPro"/>
</dbReference>
<dbReference type="GO" id="GO:0006310">
    <property type="term" value="P:DNA recombination"/>
    <property type="evidence" value="ECO:0007669"/>
    <property type="project" value="UniProtKB-UniRule"/>
</dbReference>
<dbReference type="GO" id="GO:0006281">
    <property type="term" value="P:DNA repair"/>
    <property type="evidence" value="ECO:0007669"/>
    <property type="project" value="UniProtKB-UniRule"/>
</dbReference>
<dbReference type="CDD" id="cd00009">
    <property type="entry name" value="AAA"/>
    <property type="match status" value="1"/>
</dbReference>
<dbReference type="Gene3D" id="1.10.8.60">
    <property type="match status" value="1"/>
</dbReference>
<dbReference type="Gene3D" id="3.40.50.300">
    <property type="entry name" value="P-loop containing nucleotide triphosphate hydrolases"/>
    <property type="match status" value="1"/>
</dbReference>
<dbReference type="Gene3D" id="1.10.10.10">
    <property type="entry name" value="Winged helix-like DNA-binding domain superfamily/Winged helix DNA-binding domain"/>
    <property type="match status" value="1"/>
</dbReference>
<dbReference type="HAMAP" id="MF_00016">
    <property type="entry name" value="DNA_HJ_migration_RuvB"/>
    <property type="match status" value="1"/>
</dbReference>
<dbReference type="InterPro" id="IPR003593">
    <property type="entry name" value="AAA+_ATPase"/>
</dbReference>
<dbReference type="InterPro" id="IPR041445">
    <property type="entry name" value="AAA_lid_4"/>
</dbReference>
<dbReference type="InterPro" id="IPR004605">
    <property type="entry name" value="DNA_helicase_Holl-junc_RuvB"/>
</dbReference>
<dbReference type="InterPro" id="IPR027417">
    <property type="entry name" value="P-loop_NTPase"/>
</dbReference>
<dbReference type="InterPro" id="IPR008824">
    <property type="entry name" value="RuvB-like_N"/>
</dbReference>
<dbReference type="InterPro" id="IPR008823">
    <property type="entry name" value="RuvB_C"/>
</dbReference>
<dbReference type="InterPro" id="IPR036388">
    <property type="entry name" value="WH-like_DNA-bd_sf"/>
</dbReference>
<dbReference type="InterPro" id="IPR036390">
    <property type="entry name" value="WH_DNA-bd_sf"/>
</dbReference>
<dbReference type="NCBIfam" id="NF000868">
    <property type="entry name" value="PRK00080.1"/>
    <property type="match status" value="1"/>
</dbReference>
<dbReference type="NCBIfam" id="TIGR00635">
    <property type="entry name" value="ruvB"/>
    <property type="match status" value="1"/>
</dbReference>
<dbReference type="PANTHER" id="PTHR42848">
    <property type="match status" value="1"/>
</dbReference>
<dbReference type="PANTHER" id="PTHR42848:SF1">
    <property type="entry name" value="HOLLIDAY JUNCTION BRANCH MIGRATION COMPLEX SUBUNIT RUVB"/>
    <property type="match status" value="1"/>
</dbReference>
<dbReference type="Pfam" id="PF17864">
    <property type="entry name" value="AAA_lid_4"/>
    <property type="match status" value="1"/>
</dbReference>
<dbReference type="Pfam" id="PF05491">
    <property type="entry name" value="RuvB_C"/>
    <property type="match status" value="1"/>
</dbReference>
<dbReference type="Pfam" id="PF05496">
    <property type="entry name" value="RuvB_N"/>
    <property type="match status" value="1"/>
</dbReference>
<dbReference type="SMART" id="SM00382">
    <property type="entry name" value="AAA"/>
    <property type="match status" value="1"/>
</dbReference>
<dbReference type="SUPFAM" id="SSF52540">
    <property type="entry name" value="P-loop containing nucleoside triphosphate hydrolases"/>
    <property type="match status" value="1"/>
</dbReference>
<dbReference type="SUPFAM" id="SSF46785">
    <property type="entry name" value="Winged helix' DNA-binding domain"/>
    <property type="match status" value="1"/>
</dbReference>
<protein>
    <recommendedName>
        <fullName evidence="1">Holliday junction branch migration complex subunit RuvB</fullName>
        <ecNumber evidence="1">3.6.4.-</ecNumber>
    </recommendedName>
</protein>
<keyword id="KW-0067">ATP-binding</keyword>
<keyword id="KW-0963">Cytoplasm</keyword>
<keyword id="KW-0227">DNA damage</keyword>
<keyword id="KW-0233">DNA recombination</keyword>
<keyword id="KW-0234">DNA repair</keyword>
<keyword id="KW-0238">DNA-binding</keyword>
<keyword id="KW-0378">Hydrolase</keyword>
<keyword id="KW-0547">Nucleotide-binding</keyword>
<reference key="1">
    <citation type="journal article" date="2007" name="Nat. Genet.">
        <title>Genomic analysis of Bartonella identifies type IV secretion systems as host adaptability factors.</title>
        <authorList>
            <person name="Saenz H.L."/>
            <person name="Engel P."/>
            <person name="Stoeckli M.C."/>
            <person name="Lanz C."/>
            <person name="Raddatz G."/>
            <person name="Vayssier-Taussat M."/>
            <person name="Birtles R."/>
            <person name="Schuster S.C."/>
            <person name="Dehio C."/>
        </authorList>
    </citation>
    <scope>NUCLEOTIDE SEQUENCE [LARGE SCALE GENOMIC DNA]</scope>
    <source>
        <strain>CIP 105476 / IBS 506</strain>
    </source>
</reference>
<gene>
    <name evidence="1" type="primary">ruvB</name>
    <name type="ordered locus">BT_2375</name>
</gene>
<sequence length="363" mass="40300">MHKDEDQRLLGPAPLPNDPDRSLRPQVLDDFIGQEAARANLKIFIEAAKTRQEALDHVLFVGPPGLGKTTLSQIMAKELGVNFRSTSGPVIAKAGDLAALLTNLEERDVLFIDEIHRLNPAIEEILYPAMEDYQLDLIIGEGPAARSVKIDLAKFTLVAATTRLGLLTTPLRDRFGIPIRLNFYTIEELEYIVQRNARLFAVKISDDGAHEIARRARGTPRIAGRLLRRVCDFALVKQAKQIDRKIADEALSRLEVDHLGLDPLDRRYLLLIAETFLGGPVGIETIAAALSEPRDAIEDIVEPYLLQQGFIQRTARGRILTEKAWSHLGLAAPASTSIQKRTQLSDAQDNVSLQTTLWDGEDD</sequence>
<comment type="function">
    <text evidence="1">The RuvA-RuvB-RuvC complex processes Holliday junction (HJ) DNA during genetic recombination and DNA repair, while the RuvA-RuvB complex plays an important role in the rescue of blocked DNA replication forks via replication fork reversal (RFR). RuvA specifically binds to HJ cruciform DNA, conferring on it an open structure. The RuvB hexamer acts as an ATP-dependent pump, pulling dsDNA into and through the RuvAB complex. RuvB forms 2 homohexamers on either side of HJ DNA bound by 1 or 2 RuvA tetramers; 4 subunits per hexamer contact DNA at a time. Coordinated motions by a converter formed by DNA-disengaged RuvB subunits stimulates ATP hydrolysis and nucleotide exchange. Immobilization of the converter enables RuvB to convert the ATP-contained energy into a lever motion, pulling 2 nucleotides of DNA out of the RuvA tetramer per ATP hydrolyzed, thus driving DNA branch migration. The RuvB motors rotate together with the DNA substrate, which together with the progressing nucleotide cycle form the mechanistic basis for DNA recombination by continuous HJ branch migration. Branch migration allows RuvC to scan DNA until it finds its consensus sequence, where it cleaves and resolves cruciform DNA.</text>
</comment>
<comment type="catalytic activity">
    <reaction evidence="1">
        <text>ATP + H2O = ADP + phosphate + H(+)</text>
        <dbReference type="Rhea" id="RHEA:13065"/>
        <dbReference type="ChEBI" id="CHEBI:15377"/>
        <dbReference type="ChEBI" id="CHEBI:15378"/>
        <dbReference type="ChEBI" id="CHEBI:30616"/>
        <dbReference type="ChEBI" id="CHEBI:43474"/>
        <dbReference type="ChEBI" id="CHEBI:456216"/>
    </reaction>
</comment>
<comment type="subunit">
    <text evidence="1">Homohexamer. Forms an RuvA(8)-RuvB(12)-Holliday junction (HJ) complex. HJ DNA is sandwiched between 2 RuvA tetramers; dsDNA enters through RuvA and exits via RuvB. An RuvB hexamer assembles on each DNA strand where it exits the tetramer. Each RuvB hexamer is contacted by two RuvA subunits (via domain III) on 2 adjacent RuvB subunits; this complex drives branch migration. In the full resolvosome a probable DNA-RuvA(4)-RuvB(12)-RuvC(2) complex forms which resolves the HJ.</text>
</comment>
<comment type="subcellular location">
    <subcellularLocation>
        <location evidence="1">Cytoplasm</location>
    </subcellularLocation>
</comment>
<comment type="domain">
    <text evidence="1">Has 3 domains, the large (RuvB-L) and small ATPase (RuvB-S) domains and the C-terminal head (RuvB-H) domain. The head domain binds DNA, while the ATPase domains jointly bind ATP, ADP or are empty depending on the state of the subunit in the translocation cycle. During a single DNA translocation step the structure of each domain remains the same, but their relative positions change.</text>
</comment>
<comment type="similarity">
    <text evidence="1">Belongs to the RuvB family.</text>
</comment>
<feature type="chain" id="PRO_1000074072" description="Holliday junction branch migration complex subunit RuvB">
    <location>
        <begin position="1"/>
        <end position="363"/>
    </location>
</feature>
<feature type="region of interest" description="Large ATPase domain (RuvB-L)" evidence="1">
    <location>
        <begin position="1"/>
        <end position="184"/>
    </location>
</feature>
<feature type="region of interest" description="Disordered" evidence="2">
    <location>
        <begin position="1"/>
        <end position="23"/>
    </location>
</feature>
<feature type="region of interest" description="Small ATPAse domain (RuvB-S)" evidence="1">
    <location>
        <begin position="185"/>
        <end position="255"/>
    </location>
</feature>
<feature type="region of interest" description="Head domain (RuvB-H)" evidence="1">
    <location>
        <begin position="258"/>
        <end position="363"/>
    </location>
</feature>
<feature type="binding site" evidence="1">
    <location>
        <position position="23"/>
    </location>
    <ligand>
        <name>ATP</name>
        <dbReference type="ChEBI" id="CHEBI:30616"/>
    </ligand>
</feature>
<feature type="binding site" evidence="1">
    <location>
        <position position="24"/>
    </location>
    <ligand>
        <name>ATP</name>
        <dbReference type="ChEBI" id="CHEBI:30616"/>
    </ligand>
</feature>
<feature type="binding site" evidence="1">
    <location>
        <position position="65"/>
    </location>
    <ligand>
        <name>ATP</name>
        <dbReference type="ChEBI" id="CHEBI:30616"/>
    </ligand>
</feature>
<feature type="binding site" evidence="1">
    <location>
        <position position="68"/>
    </location>
    <ligand>
        <name>ATP</name>
        <dbReference type="ChEBI" id="CHEBI:30616"/>
    </ligand>
</feature>
<feature type="binding site" evidence="1">
    <location>
        <position position="69"/>
    </location>
    <ligand>
        <name>ATP</name>
        <dbReference type="ChEBI" id="CHEBI:30616"/>
    </ligand>
</feature>
<feature type="binding site" evidence="1">
    <location>
        <position position="69"/>
    </location>
    <ligand>
        <name>Mg(2+)</name>
        <dbReference type="ChEBI" id="CHEBI:18420"/>
    </ligand>
</feature>
<feature type="binding site" evidence="1">
    <location>
        <position position="70"/>
    </location>
    <ligand>
        <name>ATP</name>
        <dbReference type="ChEBI" id="CHEBI:30616"/>
    </ligand>
</feature>
<feature type="binding site" evidence="1">
    <location>
        <begin position="131"/>
        <end position="133"/>
    </location>
    <ligand>
        <name>ATP</name>
        <dbReference type="ChEBI" id="CHEBI:30616"/>
    </ligand>
</feature>
<feature type="binding site" evidence="1">
    <location>
        <position position="174"/>
    </location>
    <ligand>
        <name>ATP</name>
        <dbReference type="ChEBI" id="CHEBI:30616"/>
    </ligand>
</feature>
<feature type="binding site" evidence="1">
    <location>
        <position position="184"/>
    </location>
    <ligand>
        <name>ATP</name>
        <dbReference type="ChEBI" id="CHEBI:30616"/>
    </ligand>
</feature>
<feature type="binding site" evidence="1">
    <location>
        <position position="221"/>
    </location>
    <ligand>
        <name>ATP</name>
        <dbReference type="ChEBI" id="CHEBI:30616"/>
    </ligand>
</feature>
<feature type="binding site" evidence="1">
    <location>
        <position position="294"/>
    </location>
    <ligand>
        <name>DNA</name>
        <dbReference type="ChEBI" id="CHEBI:16991"/>
    </ligand>
</feature>
<feature type="binding site" evidence="1">
    <location>
        <position position="313"/>
    </location>
    <ligand>
        <name>DNA</name>
        <dbReference type="ChEBI" id="CHEBI:16991"/>
    </ligand>
</feature>
<feature type="binding site" evidence="1">
    <location>
        <position position="318"/>
    </location>
    <ligand>
        <name>DNA</name>
        <dbReference type="ChEBI" id="CHEBI:16991"/>
    </ligand>
</feature>
<name>RUVB_BART1</name>
<organism>
    <name type="scientific">Bartonella tribocorum (strain CIP 105476 / IBS 506)</name>
    <dbReference type="NCBI Taxonomy" id="382640"/>
    <lineage>
        <taxon>Bacteria</taxon>
        <taxon>Pseudomonadati</taxon>
        <taxon>Pseudomonadota</taxon>
        <taxon>Alphaproteobacteria</taxon>
        <taxon>Hyphomicrobiales</taxon>
        <taxon>Bartonellaceae</taxon>
        <taxon>Bartonella</taxon>
    </lineage>
</organism>
<proteinExistence type="inferred from homology"/>